<feature type="chain" id="PRO_0000083194" description="Capsid protein">
    <location>
        <begin position="1"/>
        <end position="189"/>
    </location>
</feature>
<feature type="region of interest" description="Disordered" evidence="1">
    <location>
        <begin position="1"/>
        <end position="21"/>
    </location>
</feature>
<feature type="compositionally biased region" description="Basic residues" evidence="1">
    <location>
        <begin position="11"/>
        <end position="21"/>
    </location>
</feature>
<feature type="strand" evidence="5">
    <location>
        <begin position="49"/>
        <end position="57"/>
    </location>
</feature>
<feature type="strand" evidence="5">
    <location>
        <begin position="66"/>
        <end position="70"/>
    </location>
</feature>
<feature type="helix" evidence="5">
    <location>
        <begin position="75"/>
        <end position="77"/>
    </location>
</feature>
<feature type="turn" evidence="5">
    <location>
        <begin position="80"/>
        <end position="84"/>
    </location>
</feature>
<feature type="strand" evidence="5">
    <location>
        <begin position="86"/>
        <end position="96"/>
    </location>
</feature>
<feature type="strand" evidence="5">
    <location>
        <begin position="104"/>
        <end position="110"/>
    </location>
</feature>
<feature type="helix" evidence="5">
    <location>
        <begin position="115"/>
        <end position="117"/>
    </location>
</feature>
<feature type="helix" evidence="5">
    <location>
        <begin position="118"/>
        <end position="121"/>
    </location>
</feature>
<feature type="strand" evidence="5">
    <location>
        <begin position="130"/>
        <end position="132"/>
    </location>
</feature>
<feature type="strand" evidence="5">
    <location>
        <begin position="134"/>
        <end position="139"/>
    </location>
</feature>
<feature type="turn" evidence="5">
    <location>
        <begin position="140"/>
        <end position="143"/>
    </location>
</feature>
<feature type="helix" evidence="5">
    <location>
        <begin position="148"/>
        <end position="151"/>
    </location>
</feature>
<feature type="strand" evidence="5">
    <location>
        <begin position="152"/>
        <end position="160"/>
    </location>
</feature>
<feature type="strand" evidence="5">
    <location>
        <begin position="166"/>
        <end position="176"/>
    </location>
</feature>
<feature type="helix" evidence="4">
    <location>
        <begin position="180"/>
        <end position="182"/>
    </location>
</feature>
<sequence>MSTSGTGKMTRAQRRAAARRNRWTARVQPVIVEPLAAGQGKAIKAIAGYSISKWEASSDAITAKATNAMSITLPHELSSEKNKELKVGRVLLWLGLLPSVAGRIKACVAEKQAQAEAAFQVALAVADSSKEVVAAMYTDAFRGATLGDLLNLQIYLYASEAVPAKAVVVHLEVEHVRPTFDDFFTPVYR</sequence>
<gene>
    <name type="ORF">ORF3b</name>
</gene>
<reference key="1">
    <citation type="journal article" date="1981" name="J. Mol. Biol.">
        <title>Complete nucleotide sequence of brome mosaic virus RNA3.</title>
        <authorList>
            <person name="Ahlquist P."/>
            <person name="Luckow V."/>
            <person name="Kaesberg P."/>
        </authorList>
    </citation>
    <scope>NUCLEOTIDE SEQUENCE [GENOMIC RNA]</scope>
</reference>
<reference key="2">
    <citation type="journal article" date="2000" name="Virology">
        <title>Molecular studies on bromovirus capsid protein. VII. Selective packaging on BMV RNA4 by specific N-terminal arginine residuals.</title>
        <authorList>
            <person name="Choi Y.G."/>
            <person name="Rao A.L."/>
        </authorList>
    </citation>
    <scope>FUNCTION</scope>
    <scope>DOMAIN ARG-RICH MOTIF</scope>
</reference>
<reference key="3">
    <citation type="journal article" date="2002" name="J. Mol. Biol.">
        <title>The crystallographic structure of brome mosaic virus.</title>
        <authorList>
            <person name="Lucas R.W."/>
            <person name="Larson S.B."/>
            <person name="McPherson A."/>
        </authorList>
    </citation>
    <scope>X-RAY CRYSTALLOGRAPHY (3.4 ANGSTROMS)</scope>
</reference>
<reference key="4">
    <citation type="journal article" date="2005" name="J. Mol. Biol.">
        <title>Crystallographic structure of the T=1 particle of brome mosaic virus.</title>
        <authorList>
            <person name="Larson S.B."/>
            <person name="Lucas R.W."/>
            <person name="McPherson A."/>
        </authorList>
    </citation>
    <scope>X-RAY CRYSTALLOGRAPHY (2.9 ANGSTROMS) OF 36-189</scope>
</reference>
<proteinExistence type="evidence at protein level"/>
<comment type="function">
    <text evidence="2">Capsid protein. Binds specifically to the subgenomic RNA4 to ensure selective packaging.</text>
</comment>
<comment type="subcellular location">
    <subcellularLocation>
        <location evidence="3">Virion</location>
    </subcellularLocation>
</comment>
<comment type="domain">
    <text evidence="2">The N-terminal arginine-rich region binds selectively to subgenomic RNA4.</text>
</comment>
<comment type="similarity">
    <text evidence="3">Belongs to the bromovirus capsid protein family.</text>
</comment>
<comment type="online information" name="Virus Particle ExploreR db">
    <link uri="https://viperdb.org/Info_Page.php?VDB=1yc6"/>
    <text>Icosahedral capsid structure</text>
</comment>
<comment type="online information" name="Virus Particle ExploreR db">
    <link uri="https://viperdb.org/Info_Page.php?VDB=1js9"/>
    <text>Icosahedral capsid structure</text>
</comment>
<accession>P03602</accession>
<keyword id="KW-0002">3D-structure</keyword>
<keyword id="KW-0167">Capsid protein</keyword>
<keyword id="KW-1185">Reference proteome</keyword>
<keyword id="KW-0687">Ribonucleoprotein</keyword>
<keyword id="KW-0694">RNA-binding</keyword>
<keyword id="KW-1142">T=3 icosahedral capsid protein</keyword>
<keyword id="KW-0543">Viral nucleoprotein</keyword>
<keyword id="KW-0946">Virion</keyword>
<name>CAPSD_BMV</name>
<protein>
    <recommendedName>
        <fullName>Capsid protein</fullName>
        <shortName>CP</shortName>
    </recommendedName>
    <alternativeName>
        <fullName>Coat protein</fullName>
    </alternativeName>
</protein>
<dbReference type="EMBL" id="J02042">
    <property type="protein sequence ID" value="AAA46334.1"/>
    <property type="molecule type" value="Genomic_RNA"/>
</dbReference>
<dbReference type="PIR" id="A04213">
    <property type="entry name" value="VCBVM"/>
</dbReference>
<dbReference type="RefSeq" id="NP_041199.1">
    <property type="nucleotide sequence ID" value="NC_002028.2"/>
</dbReference>
<dbReference type="PDB" id="1JS9">
    <property type="method" value="X-ray"/>
    <property type="resolution" value="3.40 A"/>
    <property type="chains" value="A/B/C=1-189"/>
</dbReference>
<dbReference type="PDB" id="1YC6">
    <property type="method" value="X-ray"/>
    <property type="resolution" value="2.90 A"/>
    <property type="chains" value="1/2/3/4/A/B/C/D/E/F/G/H/I/J/K/L/M/N/O/P/Q/R/S/T/U/V/W/X/Y/Z=36-189"/>
</dbReference>
<dbReference type="PDB" id="3J7L">
    <property type="method" value="EM"/>
    <property type="resolution" value="3.80 A"/>
    <property type="chains" value="A/B/C=1-189"/>
</dbReference>
<dbReference type="PDB" id="3J7M">
    <property type="method" value="EM"/>
    <property type="resolution" value="3.80 A"/>
    <property type="chains" value="A/B/C=1-189"/>
</dbReference>
<dbReference type="PDB" id="3J7N">
    <property type="method" value="EM"/>
    <property type="resolution" value="3.80 A"/>
    <property type="chains" value="A/B/C=1-189"/>
</dbReference>
<dbReference type="PDB" id="6VOC">
    <property type="method" value="EM"/>
    <property type="resolution" value="3.10 A"/>
    <property type="chains" value="A/B/C=1-189"/>
</dbReference>
<dbReference type="PDBsum" id="1JS9"/>
<dbReference type="PDBsum" id="1YC6"/>
<dbReference type="PDBsum" id="3J7L"/>
<dbReference type="PDBsum" id="3J7M"/>
<dbReference type="PDBsum" id="3J7N"/>
<dbReference type="PDBsum" id="6VOC"/>
<dbReference type="EMDB" id="EMD-21260"/>
<dbReference type="SMR" id="P03602"/>
<dbReference type="KEGG" id="vg:962148"/>
<dbReference type="OrthoDB" id="17901at10239"/>
<dbReference type="EvolutionaryTrace" id="P03602"/>
<dbReference type="Proteomes" id="UP000001649">
    <property type="component" value="Genome"/>
</dbReference>
<dbReference type="GO" id="GO:0044165">
    <property type="term" value="C:host cell endoplasmic reticulum"/>
    <property type="evidence" value="ECO:0000314"/>
    <property type="project" value="CACAO"/>
</dbReference>
<dbReference type="GO" id="GO:1990904">
    <property type="term" value="C:ribonucleoprotein complex"/>
    <property type="evidence" value="ECO:0007669"/>
    <property type="project" value="UniProtKB-KW"/>
</dbReference>
<dbReference type="GO" id="GO:0039617">
    <property type="term" value="C:T=3 icosahedral viral capsid"/>
    <property type="evidence" value="ECO:0007669"/>
    <property type="project" value="UniProtKB-KW"/>
</dbReference>
<dbReference type="GO" id="GO:0019013">
    <property type="term" value="C:viral nucleocapsid"/>
    <property type="evidence" value="ECO:0007669"/>
    <property type="project" value="UniProtKB-KW"/>
</dbReference>
<dbReference type="GO" id="GO:0003723">
    <property type="term" value="F:RNA binding"/>
    <property type="evidence" value="ECO:0007669"/>
    <property type="project" value="UniProtKB-KW"/>
</dbReference>
<dbReference type="GO" id="GO:0005198">
    <property type="term" value="F:structural molecule activity"/>
    <property type="evidence" value="ECO:0007669"/>
    <property type="project" value="InterPro"/>
</dbReference>
<dbReference type="FunFam" id="2.60.120.220:FF:000001">
    <property type="entry name" value="Capsid protein"/>
    <property type="match status" value="1"/>
</dbReference>
<dbReference type="Gene3D" id="2.60.120.220">
    <property type="entry name" value="Satellite virus coat domain"/>
    <property type="match status" value="1"/>
</dbReference>
<dbReference type="InterPro" id="IPR002009">
    <property type="entry name" value="Bromo_CP"/>
</dbReference>
<dbReference type="Pfam" id="PF01318">
    <property type="entry name" value="Bromo_coat"/>
    <property type="match status" value="1"/>
</dbReference>
<dbReference type="SUPFAM" id="SSF88633">
    <property type="entry name" value="Positive stranded ssRNA viruses"/>
    <property type="match status" value="1"/>
</dbReference>
<organism>
    <name type="scientific">Brome mosaic virus</name>
    <name type="common">BMV</name>
    <dbReference type="NCBI Taxonomy" id="12302"/>
    <lineage>
        <taxon>Viruses</taxon>
        <taxon>Riboviria</taxon>
        <taxon>Orthornavirae</taxon>
        <taxon>Kitrinoviricota</taxon>
        <taxon>Alsuviricetes</taxon>
        <taxon>Martellivirales</taxon>
        <taxon>Bromoviridae</taxon>
        <taxon>Bromovirus</taxon>
    </lineage>
</organism>
<organismHost>
    <name type="scientific">Bromus inermis</name>
    <name type="common">Smooth brome grass</name>
    <name type="synonym">Bromopsis inermis</name>
    <dbReference type="NCBI Taxonomy" id="15371"/>
</organismHost>
<evidence type="ECO:0000256" key="1">
    <source>
        <dbReference type="SAM" id="MobiDB-lite"/>
    </source>
</evidence>
<evidence type="ECO:0000269" key="2">
    <source>
    </source>
</evidence>
<evidence type="ECO:0000305" key="3"/>
<evidence type="ECO:0007829" key="4">
    <source>
        <dbReference type="PDB" id="1JS9"/>
    </source>
</evidence>
<evidence type="ECO:0007829" key="5">
    <source>
        <dbReference type="PDB" id="1YC6"/>
    </source>
</evidence>